<evidence type="ECO:0000255" key="1">
    <source>
        <dbReference type="HAMAP-Rule" id="MF_00811"/>
    </source>
</evidence>
<evidence type="ECO:0000305" key="2"/>
<feature type="chain" id="PRO_0000196975" description="2,3,4,5-tetrahydropyridine-2,6-dicarboxylate N-succinyltransferase">
    <location>
        <begin position="1"/>
        <end position="273"/>
    </location>
</feature>
<feature type="binding site" evidence="1">
    <location>
        <position position="106"/>
    </location>
    <ligand>
        <name>substrate</name>
    </ligand>
</feature>
<feature type="binding site" evidence="1">
    <location>
        <position position="143"/>
    </location>
    <ligand>
        <name>substrate</name>
    </ligand>
</feature>
<proteinExistence type="inferred from homology"/>
<protein>
    <recommendedName>
        <fullName evidence="1">2,3,4,5-tetrahydropyridine-2,6-dicarboxylate N-succinyltransferase</fullName>
        <ecNumber evidence="1">2.3.1.117</ecNumber>
    </recommendedName>
    <alternativeName>
        <fullName evidence="1">Tetrahydrodipicolinate N-succinyltransferase</fullName>
        <shortName evidence="1">THDP succinyltransferase</shortName>
        <shortName evidence="1">THP succinyltransferase</shortName>
        <shortName evidence="1">Tetrahydropicolinate succinylase</shortName>
    </alternativeName>
</protein>
<gene>
    <name evidence="1" type="primary">dapD</name>
    <name type="ordered locus">Wbm0449</name>
</gene>
<name>DAPD_WOLTR</name>
<dbReference type="EC" id="2.3.1.117" evidence="1"/>
<dbReference type="EMBL" id="AE017321">
    <property type="protein sequence ID" value="AAW71037.1"/>
    <property type="status" value="ALT_INIT"/>
    <property type="molecule type" value="Genomic_DNA"/>
</dbReference>
<dbReference type="RefSeq" id="WP_011256647.1">
    <property type="nucleotide sequence ID" value="NC_006833.1"/>
</dbReference>
<dbReference type="SMR" id="Q5GSI7"/>
<dbReference type="STRING" id="292805.Wbm0449"/>
<dbReference type="KEGG" id="wbm:Wbm0449"/>
<dbReference type="eggNOG" id="COG2171">
    <property type="taxonomic scope" value="Bacteria"/>
</dbReference>
<dbReference type="HOGENOM" id="CLU_050859_0_1_5"/>
<dbReference type="UniPathway" id="UPA00034">
    <property type="reaction ID" value="UER00019"/>
</dbReference>
<dbReference type="Proteomes" id="UP000000534">
    <property type="component" value="Chromosome"/>
</dbReference>
<dbReference type="GO" id="GO:0005737">
    <property type="term" value="C:cytoplasm"/>
    <property type="evidence" value="ECO:0007669"/>
    <property type="project" value="UniProtKB-SubCell"/>
</dbReference>
<dbReference type="GO" id="GO:0008666">
    <property type="term" value="F:2,3,4,5-tetrahydropyridine-2,6-dicarboxylate N-succinyltransferase activity"/>
    <property type="evidence" value="ECO:0007669"/>
    <property type="project" value="UniProtKB-UniRule"/>
</dbReference>
<dbReference type="GO" id="GO:0019877">
    <property type="term" value="P:diaminopimelate biosynthetic process"/>
    <property type="evidence" value="ECO:0007669"/>
    <property type="project" value="UniProtKB-UniRule"/>
</dbReference>
<dbReference type="GO" id="GO:0009089">
    <property type="term" value="P:lysine biosynthetic process via diaminopimelate"/>
    <property type="evidence" value="ECO:0007669"/>
    <property type="project" value="UniProtKB-UniRule"/>
</dbReference>
<dbReference type="CDD" id="cd03350">
    <property type="entry name" value="LbH_THP_succinylT"/>
    <property type="match status" value="1"/>
</dbReference>
<dbReference type="Gene3D" id="2.160.10.10">
    <property type="entry name" value="Hexapeptide repeat proteins"/>
    <property type="match status" value="1"/>
</dbReference>
<dbReference type="Gene3D" id="1.10.166.10">
    <property type="entry name" value="Tetrahydrodipicolinate-N-succinyltransferase, N-terminal domain"/>
    <property type="match status" value="1"/>
</dbReference>
<dbReference type="HAMAP" id="MF_00811">
    <property type="entry name" value="DapD"/>
    <property type="match status" value="1"/>
</dbReference>
<dbReference type="InterPro" id="IPR005664">
    <property type="entry name" value="DapD_Trfase_Hexpep_rpt_fam"/>
</dbReference>
<dbReference type="InterPro" id="IPR001451">
    <property type="entry name" value="Hexapep"/>
</dbReference>
<dbReference type="InterPro" id="IPR023180">
    <property type="entry name" value="THP_succinylTrfase_dom1"/>
</dbReference>
<dbReference type="InterPro" id="IPR037133">
    <property type="entry name" value="THP_succinylTrfase_N_sf"/>
</dbReference>
<dbReference type="InterPro" id="IPR050179">
    <property type="entry name" value="Trans_hexapeptide_repeat"/>
</dbReference>
<dbReference type="InterPro" id="IPR011004">
    <property type="entry name" value="Trimer_LpxA-like_sf"/>
</dbReference>
<dbReference type="NCBIfam" id="TIGR00965">
    <property type="entry name" value="dapD"/>
    <property type="match status" value="1"/>
</dbReference>
<dbReference type="NCBIfam" id="NF008808">
    <property type="entry name" value="PRK11830.1"/>
    <property type="match status" value="1"/>
</dbReference>
<dbReference type="PANTHER" id="PTHR43300:SF10">
    <property type="entry name" value="2,3,4,5-TETRAHYDROPYRIDINE-2,6-DICARBOXYLATE N-ACETYLTRANSFERASE"/>
    <property type="match status" value="1"/>
</dbReference>
<dbReference type="PANTHER" id="PTHR43300">
    <property type="entry name" value="ACETYLTRANSFERASE"/>
    <property type="match status" value="1"/>
</dbReference>
<dbReference type="Pfam" id="PF14602">
    <property type="entry name" value="Hexapep_2"/>
    <property type="match status" value="1"/>
</dbReference>
<dbReference type="Pfam" id="PF14805">
    <property type="entry name" value="THDPS_N_2"/>
    <property type="match status" value="1"/>
</dbReference>
<dbReference type="SUPFAM" id="SSF51161">
    <property type="entry name" value="Trimeric LpxA-like enzymes"/>
    <property type="match status" value="1"/>
</dbReference>
<reference key="1">
    <citation type="journal article" date="2005" name="PLoS Biol.">
        <title>The Wolbachia genome of Brugia malayi: endosymbiont evolution within a human pathogenic nematode.</title>
        <authorList>
            <person name="Foster J."/>
            <person name="Ganatra M."/>
            <person name="Kamal I."/>
            <person name="Ware J."/>
            <person name="Makarova K."/>
            <person name="Ivanova N."/>
            <person name="Bhattacharyya A."/>
            <person name="Kapatral V."/>
            <person name="Kumar S."/>
            <person name="Posfai J."/>
            <person name="Vincze T."/>
            <person name="Ingram J."/>
            <person name="Moran L."/>
            <person name="Lapidus A."/>
            <person name="Omelchenko M."/>
            <person name="Kyrpides N."/>
            <person name="Ghedin E."/>
            <person name="Wang S."/>
            <person name="Goltsman E."/>
            <person name="Joukov V."/>
            <person name="Ostrovskaya O."/>
            <person name="Tsukerman K."/>
            <person name="Mazur M."/>
            <person name="Comb D."/>
            <person name="Koonin E."/>
            <person name="Slatko B."/>
        </authorList>
    </citation>
    <scope>NUCLEOTIDE SEQUENCE [LARGE SCALE GENOMIC DNA]</scope>
    <source>
        <strain>TRS</strain>
    </source>
</reference>
<sequence>MQLEKIQSDVEDIWKNRSKLSNRSVKRAARVIIKKVIKLLDSGKIRVAERLSDGKWIVHTWIKQAISLYFLTEESKMIDHTGWWFDKVNNKFDGWNEEEFHQSKIRAVPGCFVRQSAYVGTNVVLMPSFINVGAYISSGTMIDTWSTIGSCAQIGKNCHVSGGVGIGGVLEPIQASPVIIEDNCFIGARSEVAEGVIIREGSVLGMGVFIGASTKIIDRETNKVFYGEVPPYSVVVPGSTLSANNISIYCAIIVKKVDEKTRQKTSINEILRD</sequence>
<comment type="catalytic activity">
    <reaction evidence="1">
        <text>(S)-2,3,4,5-tetrahydrodipicolinate + succinyl-CoA + H2O = (S)-2-succinylamino-6-oxoheptanedioate + CoA</text>
        <dbReference type="Rhea" id="RHEA:17325"/>
        <dbReference type="ChEBI" id="CHEBI:15377"/>
        <dbReference type="ChEBI" id="CHEBI:15685"/>
        <dbReference type="ChEBI" id="CHEBI:16845"/>
        <dbReference type="ChEBI" id="CHEBI:57287"/>
        <dbReference type="ChEBI" id="CHEBI:57292"/>
        <dbReference type="EC" id="2.3.1.117"/>
    </reaction>
</comment>
<comment type="pathway">
    <text evidence="1">Amino-acid biosynthesis; L-lysine biosynthesis via DAP pathway; LL-2,6-diaminopimelate from (S)-tetrahydrodipicolinate (succinylase route): step 1/3.</text>
</comment>
<comment type="subunit">
    <text evidence="1">Homotrimer.</text>
</comment>
<comment type="subcellular location">
    <subcellularLocation>
        <location evidence="1">Cytoplasm</location>
    </subcellularLocation>
</comment>
<comment type="similarity">
    <text evidence="1">Belongs to the transferase hexapeptide repeat family.</text>
</comment>
<comment type="sequence caution" evidence="2">
    <conflict type="erroneous initiation">
        <sequence resource="EMBL-CDS" id="AAW71037"/>
    </conflict>
</comment>
<keyword id="KW-0012">Acyltransferase</keyword>
<keyword id="KW-0028">Amino-acid biosynthesis</keyword>
<keyword id="KW-0963">Cytoplasm</keyword>
<keyword id="KW-0220">Diaminopimelate biosynthesis</keyword>
<keyword id="KW-0457">Lysine biosynthesis</keyword>
<keyword id="KW-1185">Reference proteome</keyword>
<keyword id="KW-0677">Repeat</keyword>
<keyword id="KW-0808">Transferase</keyword>
<organism>
    <name type="scientific">Wolbachia sp. subsp. Brugia malayi (strain TRS)</name>
    <dbReference type="NCBI Taxonomy" id="292805"/>
    <lineage>
        <taxon>Bacteria</taxon>
        <taxon>Pseudomonadati</taxon>
        <taxon>Pseudomonadota</taxon>
        <taxon>Alphaproteobacteria</taxon>
        <taxon>Rickettsiales</taxon>
        <taxon>Anaplasmataceae</taxon>
        <taxon>Wolbachieae</taxon>
        <taxon>Wolbachia</taxon>
    </lineage>
</organism>
<accession>Q5GSI7</accession>